<keyword id="KW-0027">Amidation</keyword>
<keyword id="KW-0044">Antibiotic</keyword>
<keyword id="KW-0929">Antimicrobial</keyword>
<keyword id="KW-0165">Cleavage on pair of basic residues</keyword>
<keyword id="KW-0211">Defensin</keyword>
<keyword id="KW-0903">Direct protein sequencing</keyword>
<keyword id="KW-1015">Disulfide bond</keyword>
<keyword id="KW-0391">Immunity</keyword>
<keyword id="KW-0399">Innate immunity</keyword>
<keyword id="KW-1185">Reference proteome</keyword>
<keyword id="KW-0964">Secreted</keyword>
<keyword id="KW-0732">Signal</keyword>
<organism>
    <name type="scientific">Apis mellifera</name>
    <name type="common">Honeybee</name>
    <dbReference type="NCBI Taxonomy" id="7460"/>
    <lineage>
        <taxon>Eukaryota</taxon>
        <taxon>Metazoa</taxon>
        <taxon>Ecdysozoa</taxon>
        <taxon>Arthropoda</taxon>
        <taxon>Hexapoda</taxon>
        <taxon>Insecta</taxon>
        <taxon>Pterygota</taxon>
        <taxon>Neoptera</taxon>
        <taxon>Endopterygota</taxon>
        <taxon>Hymenoptera</taxon>
        <taxon>Apocrita</taxon>
        <taxon>Aculeata</taxon>
        <taxon>Apoidea</taxon>
        <taxon>Anthophila</taxon>
        <taxon>Apidae</taxon>
        <taxon>Apis</taxon>
    </lineage>
</organism>
<accession>P17722</accession>
<accession>C7AHT1</accession>
<accession>Q5MY57</accession>
<accession>Q9BMA5</accession>
<evidence type="ECO:0000255" key="1"/>
<evidence type="ECO:0000255" key="2">
    <source>
        <dbReference type="PROSITE-ProRule" id="PRU00710"/>
    </source>
</evidence>
<evidence type="ECO:0000269" key="3">
    <source>
    </source>
</evidence>
<evidence type="ECO:0000269" key="4">
    <source>
    </source>
</evidence>
<evidence type="ECO:0000305" key="5"/>
<evidence type="ECO:0000305" key="6">
    <source>
    </source>
</evidence>
<protein>
    <recommendedName>
        <fullName>Defensin-1</fullName>
    </recommendedName>
    <alternativeName>
        <fullName>Royalisin</fullName>
    </alternativeName>
</protein>
<reference key="1">
    <citation type="journal article" date="2005" name="Insect Biochem. Mol. Biol.">
        <title>Two structurally different defensin genes, one of them encoding a novel defensin isoform, are expressed in honeybee Apis mellifera.</title>
        <authorList>
            <person name="Klaudiny J."/>
            <person name="Albert S."/>
            <person name="Bachanova K."/>
            <person name="Kopernicky J."/>
            <person name="Simuth J."/>
        </authorList>
    </citation>
    <scope>NUCLEOTIDE SEQUENCE [GENOMIC DNA]</scope>
    <scope>TISSUE SPECIFICITY</scope>
</reference>
<reference key="2">
    <citation type="journal article" date="1994" name="J. Biol. Chem.">
        <title>Acute transcriptional response of the honeybee peptide-antibiotics gene repertoire and required post-translational conversion of the precursor structures.</title>
        <authorList>
            <person name="Casteels-Josson K."/>
            <person name="Zhang W."/>
            <person name="Capaci T."/>
            <person name="Casteels P."/>
            <person name="Tempst P."/>
        </authorList>
    </citation>
    <scope>NUCLEOTIDE SEQUENCE [MRNA]</scope>
    <scope>AMIDATION AT PHE-94</scope>
    <source>
        <tissue>Hemolymph</tissue>
    </source>
</reference>
<reference key="3">
    <citation type="journal article" date="2009" name="Mol. Biol. Evol.">
        <title>Rapid evolution of immune proteins in social insects.</title>
        <authorList>
            <person name="Viljakainen L."/>
            <person name="Evans J.D."/>
            <person name="Hasselmann M."/>
            <person name="Rueppell O."/>
            <person name="Tingek S."/>
            <person name="Pamilo P."/>
        </authorList>
    </citation>
    <scope>NUCLEOTIDE SEQUENCE [MRNA] OF 18-95</scope>
</reference>
<reference key="4">
    <citation type="submission" date="2001-02" db="EMBL/GenBank/DDBJ databases">
        <title>Polymorphism defensin gene of South Ural honeybee Apis mellifera.</title>
        <authorList>
            <person name="Lvov A.V."/>
            <person name="Nikolenko A.G."/>
            <person name="Chemeris A.V."/>
            <person name="Sabirganov B.E."/>
        </authorList>
    </citation>
    <scope>NUCLEOTIDE SEQUENCE [GENOMIC DNA] OF 26-82</scope>
    <source>
        <tissue>Thorax</tissue>
    </source>
</reference>
<reference key="5">
    <citation type="journal article" date="1990" name="J. Biol. Chem.">
        <title>A potent antibacterial protein in royal jelly. Purification and determination of the primary structure of royalisin.</title>
        <authorList>
            <person name="Fujiwara S."/>
            <person name="Imai J."/>
            <person name="Fujiwara M."/>
            <person name="Yaeshima T."/>
            <person name="Kawashima T."/>
            <person name="Kobayashi K."/>
        </authorList>
    </citation>
    <scope>PROTEIN SEQUENCE OF 44-94</scope>
    <scope>DISULFIDE BONDS</scope>
    <source>
        <tissue>Royal jelly</tissue>
    </source>
</reference>
<proteinExistence type="evidence at protein level"/>
<feature type="signal peptide" evidence="1">
    <location>
        <begin position="1"/>
        <end position="19"/>
    </location>
</feature>
<feature type="propeptide" id="PRO_0000006740" evidence="4">
    <location>
        <begin position="20"/>
        <end position="43"/>
    </location>
</feature>
<feature type="chain" id="PRO_0000006741" description="Defensin-1">
    <location>
        <begin position="44"/>
        <end position="94"/>
    </location>
</feature>
<feature type="modified residue" description="Phenylalanine amide" evidence="6">
    <location>
        <position position="94"/>
    </location>
</feature>
<feature type="disulfide bond" evidence="2 4">
    <location>
        <begin position="46"/>
        <end position="74"/>
    </location>
</feature>
<feature type="disulfide bond" evidence="2 4">
    <location>
        <begin position="60"/>
        <end position="79"/>
    </location>
</feature>
<feature type="disulfide bond" evidence="2 4">
    <location>
        <begin position="64"/>
        <end position="81"/>
    </location>
</feature>
<feature type="sequence conflict" description="In Ref. 4; CAC33429." evidence="5" ref="4">
    <original>L</original>
    <variation>H</variation>
    <location>
        <position position="65"/>
    </location>
</feature>
<feature type="sequence conflict" description="In Ref. 2; AAA67443." evidence="5" ref="2">
    <original>GV</original>
    <variation>VG</variation>
    <location>
        <begin position="77"/>
        <end position="78"/>
    </location>
</feature>
<feature type="sequence conflict" description="In Ref. 5; AA sequence." evidence="5" ref="5">
    <original>R</original>
    <variation>Y</variation>
    <location>
        <position position="93"/>
    </location>
</feature>
<dbReference type="EMBL" id="AY496432">
    <property type="protein sequence ID" value="AAS75803.1"/>
    <property type="molecule type" value="Genomic_DNA"/>
</dbReference>
<dbReference type="EMBL" id="U15955">
    <property type="protein sequence ID" value="AAA67443.1"/>
    <property type="molecule type" value="mRNA"/>
</dbReference>
<dbReference type="EMBL" id="FJ546136">
    <property type="protein sequence ID" value="ACT66903.1"/>
    <property type="molecule type" value="mRNA"/>
</dbReference>
<dbReference type="EMBL" id="AJ308527">
    <property type="protein sequence ID" value="CAC33429.1"/>
    <property type="molecule type" value="Genomic_DNA"/>
</dbReference>
<dbReference type="PIR" id="C55392">
    <property type="entry name" value="C55392"/>
</dbReference>
<dbReference type="RefSeq" id="NP_001011616.2">
    <property type="nucleotide sequence ID" value="NM_001011616.2"/>
</dbReference>
<dbReference type="STRING" id="7460.P17722"/>
<dbReference type="PaxDb" id="7460-GB41428-PA"/>
<dbReference type="EnsemblMetazoa" id="NM_001011616">
    <property type="protein sequence ID" value="NP_001011616"/>
    <property type="gene ID" value="GeneID_406143"/>
</dbReference>
<dbReference type="GeneID" id="406143"/>
<dbReference type="KEGG" id="ame:406143"/>
<dbReference type="CTD" id="406143"/>
<dbReference type="eggNOG" id="ENOG502T7DA">
    <property type="taxonomic scope" value="Eukaryota"/>
</dbReference>
<dbReference type="HOGENOM" id="CLU_174272_0_0_1"/>
<dbReference type="InParanoid" id="P17722"/>
<dbReference type="OMA" id="CAVHCIG"/>
<dbReference type="OrthoDB" id="10038290at2759"/>
<dbReference type="PhylomeDB" id="P17722"/>
<dbReference type="Proteomes" id="UP000005203">
    <property type="component" value="Linkage group LG6"/>
</dbReference>
<dbReference type="GO" id="GO:0005615">
    <property type="term" value="C:extracellular space"/>
    <property type="evidence" value="ECO:0007669"/>
    <property type="project" value="TreeGrafter"/>
</dbReference>
<dbReference type="GO" id="GO:0042742">
    <property type="term" value="P:defense response to bacterium"/>
    <property type="evidence" value="ECO:0007669"/>
    <property type="project" value="UniProtKB-KW"/>
</dbReference>
<dbReference type="GO" id="GO:0006959">
    <property type="term" value="P:humoral immune response"/>
    <property type="evidence" value="ECO:0007669"/>
    <property type="project" value="TreeGrafter"/>
</dbReference>
<dbReference type="GO" id="GO:0045087">
    <property type="term" value="P:innate immune response"/>
    <property type="evidence" value="ECO:0007669"/>
    <property type="project" value="UniProtKB-KW"/>
</dbReference>
<dbReference type="CDD" id="cd21806">
    <property type="entry name" value="DEFL_defensin-like"/>
    <property type="match status" value="1"/>
</dbReference>
<dbReference type="Gene3D" id="3.30.30.10">
    <property type="entry name" value="Knottin, scorpion toxin-like"/>
    <property type="match status" value="1"/>
</dbReference>
<dbReference type="InterPro" id="IPR017982">
    <property type="entry name" value="Defensin_insect"/>
</dbReference>
<dbReference type="InterPro" id="IPR001542">
    <property type="entry name" value="Defensin_invertebrate/fungal"/>
</dbReference>
<dbReference type="InterPro" id="IPR003614">
    <property type="entry name" value="Scorpion_toxin-like"/>
</dbReference>
<dbReference type="InterPro" id="IPR036574">
    <property type="entry name" value="Scorpion_toxin-like_sf"/>
</dbReference>
<dbReference type="PANTHER" id="PTHR13645">
    <property type="entry name" value="DEFENSIN"/>
    <property type="match status" value="1"/>
</dbReference>
<dbReference type="PANTHER" id="PTHR13645:SF0">
    <property type="entry name" value="DEFENSIN"/>
    <property type="match status" value="1"/>
</dbReference>
<dbReference type="Pfam" id="PF01097">
    <property type="entry name" value="Defensin_2"/>
    <property type="match status" value="1"/>
</dbReference>
<dbReference type="PRINTS" id="PR00271">
    <property type="entry name" value="DEFENSIN"/>
</dbReference>
<dbReference type="SMART" id="SM00505">
    <property type="entry name" value="Knot1"/>
    <property type="match status" value="1"/>
</dbReference>
<dbReference type="SUPFAM" id="SSF57095">
    <property type="entry name" value="Scorpion toxin-like"/>
    <property type="match status" value="1"/>
</dbReference>
<dbReference type="PROSITE" id="PS51378">
    <property type="entry name" value="INVERT_DEFENSINS"/>
    <property type="match status" value="1"/>
</dbReference>
<sequence length="95" mass="10717">MKIYFIVGLLFMAMVAIMAAPVEDEFEPLEHFENEERADRHRRVTCDLLSFKGQVNDSACAANCLSLGKAGGHCEKGVCICRKTSFKDLWDKRFG</sequence>
<name>DEFI_APIME</name>
<comment type="function">
    <text>Found in royal jelly and in hemolymph, potent antibacterial protein against Gram-positive bacteria at low concentration.</text>
</comment>
<comment type="subcellular location">
    <subcellularLocation>
        <location>Secreted</location>
    </subcellularLocation>
</comment>
<comment type="tissue specificity">
    <text evidence="3">High expression in head, hypopharyngeal gland, and mandibular gland. Low expression in thorax and thoracic salivary gland.</text>
</comment>
<comment type="similarity">
    <text evidence="2">Belongs to the invertebrate defensin family. Type 1 subfamily.</text>
</comment>